<name>ATPE_ACISJ</name>
<keyword id="KW-0066">ATP synthesis</keyword>
<keyword id="KW-0997">Cell inner membrane</keyword>
<keyword id="KW-1003">Cell membrane</keyword>
<keyword id="KW-0139">CF(1)</keyword>
<keyword id="KW-0375">Hydrogen ion transport</keyword>
<keyword id="KW-0406">Ion transport</keyword>
<keyword id="KW-0472">Membrane</keyword>
<keyword id="KW-0813">Transport</keyword>
<reference key="1">
    <citation type="submission" date="2006-12" db="EMBL/GenBank/DDBJ databases">
        <title>Complete sequence of chromosome 1 of Acidovorax sp. JS42.</title>
        <authorList>
            <person name="Copeland A."/>
            <person name="Lucas S."/>
            <person name="Lapidus A."/>
            <person name="Barry K."/>
            <person name="Detter J.C."/>
            <person name="Glavina del Rio T."/>
            <person name="Dalin E."/>
            <person name="Tice H."/>
            <person name="Pitluck S."/>
            <person name="Chertkov O."/>
            <person name="Brettin T."/>
            <person name="Bruce D."/>
            <person name="Han C."/>
            <person name="Tapia R."/>
            <person name="Gilna P."/>
            <person name="Schmutz J."/>
            <person name="Larimer F."/>
            <person name="Land M."/>
            <person name="Hauser L."/>
            <person name="Kyrpides N."/>
            <person name="Kim E."/>
            <person name="Stahl D."/>
            <person name="Richardson P."/>
        </authorList>
    </citation>
    <scope>NUCLEOTIDE SEQUENCE [LARGE SCALE GENOMIC DNA]</scope>
    <source>
        <strain>JS42</strain>
    </source>
</reference>
<protein>
    <recommendedName>
        <fullName evidence="1">ATP synthase epsilon chain</fullName>
    </recommendedName>
    <alternativeName>
        <fullName evidence="1">ATP synthase F1 sector epsilon subunit</fullName>
    </alternativeName>
    <alternativeName>
        <fullName evidence="1">F-ATPase epsilon subunit</fullName>
    </alternativeName>
</protein>
<dbReference type="EMBL" id="CP000539">
    <property type="protein sequence ID" value="ABM40563.1"/>
    <property type="molecule type" value="Genomic_DNA"/>
</dbReference>
<dbReference type="SMR" id="A1W2T8"/>
<dbReference type="STRING" id="232721.Ajs_0309"/>
<dbReference type="KEGG" id="ajs:Ajs_0309"/>
<dbReference type="eggNOG" id="COG0355">
    <property type="taxonomic scope" value="Bacteria"/>
</dbReference>
<dbReference type="HOGENOM" id="CLU_084338_2_0_4"/>
<dbReference type="Proteomes" id="UP000000645">
    <property type="component" value="Chromosome"/>
</dbReference>
<dbReference type="GO" id="GO:0005886">
    <property type="term" value="C:plasma membrane"/>
    <property type="evidence" value="ECO:0007669"/>
    <property type="project" value="UniProtKB-SubCell"/>
</dbReference>
<dbReference type="GO" id="GO:0045259">
    <property type="term" value="C:proton-transporting ATP synthase complex"/>
    <property type="evidence" value="ECO:0007669"/>
    <property type="project" value="UniProtKB-KW"/>
</dbReference>
<dbReference type="GO" id="GO:0005524">
    <property type="term" value="F:ATP binding"/>
    <property type="evidence" value="ECO:0007669"/>
    <property type="project" value="UniProtKB-UniRule"/>
</dbReference>
<dbReference type="GO" id="GO:0046933">
    <property type="term" value="F:proton-transporting ATP synthase activity, rotational mechanism"/>
    <property type="evidence" value="ECO:0007669"/>
    <property type="project" value="UniProtKB-UniRule"/>
</dbReference>
<dbReference type="CDD" id="cd12152">
    <property type="entry name" value="F1-ATPase_delta"/>
    <property type="match status" value="1"/>
</dbReference>
<dbReference type="FunFam" id="2.60.15.10:FF:000001">
    <property type="entry name" value="ATP synthase epsilon chain"/>
    <property type="match status" value="1"/>
</dbReference>
<dbReference type="Gene3D" id="1.20.5.440">
    <property type="entry name" value="ATP synthase delta/epsilon subunit, C-terminal domain"/>
    <property type="match status" value="1"/>
</dbReference>
<dbReference type="Gene3D" id="2.60.15.10">
    <property type="entry name" value="F0F1 ATP synthase delta/epsilon subunit, N-terminal"/>
    <property type="match status" value="1"/>
</dbReference>
<dbReference type="HAMAP" id="MF_00530">
    <property type="entry name" value="ATP_synth_epsil_bac"/>
    <property type="match status" value="1"/>
</dbReference>
<dbReference type="InterPro" id="IPR036794">
    <property type="entry name" value="ATP_F1_dsu/esu_C_sf"/>
</dbReference>
<dbReference type="InterPro" id="IPR001469">
    <property type="entry name" value="ATP_synth_F1_dsu/esu"/>
</dbReference>
<dbReference type="InterPro" id="IPR020546">
    <property type="entry name" value="ATP_synth_F1_dsu/esu_N"/>
</dbReference>
<dbReference type="InterPro" id="IPR020547">
    <property type="entry name" value="ATP_synth_F1_esu_C"/>
</dbReference>
<dbReference type="InterPro" id="IPR036771">
    <property type="entry name" value="ATPsynth_dsu/esu_N"/>
</dbReference>
<dbReference type="NCBIfam" id="TIGR01216">
    <property type="entry name" value="ATP_synt_epsi"/>
    <property type="match status" value="1"/>
</dbReference>
<dbReference type="NCBIfam" id="NF001847">
    <property type="entry name" value="PRK00571.1-4"/>
    <property type="match status" value="1"/>
</dbReference>
<dbReference type="PANTHER" id="PTHR13822">
    <property type="entry name" value="ATP SYNTHASE DELTA/EPSILON CHAIN"/>
    <property type="match status" value="1"/>
</dbReference>
<dbReference type="PANTHER" id="PTHR13822:SF10">
    <property type="entry name" value="ATP SYNTHASE EPSILON CHAIN, CHLOROPLASTIC"/>
    <property type="match status" value="1"/>
</dbReference>
<dbReference type="Pfam" id="PF00401">
    <property type="entry name" value="ATP-synt_DE"/>
    <property type="match status" value="1"/>
</dbReference>
<dbReference type="Pfam" id="PF02823">
    <property type="entry name" value="ATP-synt_DE_N"/>
    <property type="match status" value="1"/>
</dbReference>
<dbReference type="SUPFAM" id="SSF46604">
    <property type="entry name" value="Epsilon subunit of F1F0-ATP synthase C-terminal domain"/>
    <property type="match status" value="1"/>
</dbReference>
<dbReference type="SUPFAM" id="SSF51344">
    <property type="entry name" value="Epsilon subunit of F1F0-ATP synthase N-terminal domain"/>
    <property type="match status" value="1"/>
</dbReference>
<proteinExistence type="inferred from homology"/>
<sequence>MNTIHVDVVSAEESIFSGEARFVALPGEAGELGIYPRHTPLITRIKPGSVRIELPDGNEEFVFVAGGILEVQPDCVTVLSDTAIRGRDLDDQKAQEAKAAAEEALKNAKSEIDLARAQSELAVMAAQIAALRKFRQKR</sequence>
<accession>A1W2T8</accession>
<comment type="function">
    <text evidence="1">Produces ATP from ADP in the presence of a proton gradient across the membrane.</text>
</comment>
<comment type="subunit">
    <text evidence="1">F-type ATPases have 2 components, CF(1) - the catalytic core - and CF(0) - the membrane proton channel. CF(1) has five subunits: alpha(3), beta(3), gamma(1), delta(1), epsilon(1). CF(0) has three main subunits: a, b and c.</text>
</comment>
<comment type="subcellular location">
    <subcellularLocation>
        <location evidence="1">Cell inner membrane</location>
        <topology evidence="1">Peripheral membrane protein</topology>
    </subcellularLocation>
</comment>
<comment type="similarity">
    <text evidence="1">Belongs to the ATPase epsilon chain family.</text>
</comment>
<organism>
    <name type="scientific">Acidovorax sp. (strain JS42)</name>
    <dbReference type="NCBI Taxonomy" id="232721"/>
    <lineage>
        <taxon>Bacteria</taxon>
        <taxon>Pseudomonadati</taxon>
        <taxon>Pseudomonadota</taxon>
        <taxon>Betaproteobacteria</taxon>
        <taxon>Burkholderiales</taxon>
        <taxon>Comamonadaceae</taxon>
        <taxon>Acidovorax</taxon>
    </lineage>
</organism>
<gene>
    <name evidence="1" type="primary">atpC</name>
    <name type="ordered locus">Ajs_0309</name>
</gene>
<feature type="chain" id="PRO_1000056451" description="ATP synthase epsilon chain">
    <location>
        <begin position="1"/>
        <end position="138"/>
    </location>
</feature>
<evidence type="ECO:0000255" key="1">
    <source>
        <dbReference type="HAMAP-Rule" id="MF_00530"/>
    </source>
</evidence>